<organism>
    <name type="scientific">Methanosarcina barkeri (strain Fusaro / DSM 804)</name>
    <dbReference type="NCBI Taxonomy" id="269797"/>
    <lineage>
        <taxon>Archaea</taxon>
        <taxon>Methanobacteriati</taxon>
        <taxon>Methanobacteriota</taxon>
        <taxon>Stenosarchaea group</taxon>
        <taxon>Methanomicrobia</taxon>
        <taxon>Methanosarcinales</taxon>
        <taxon>Methanosarcinaceae</taxon>
        <taxon>Methanosarcina</taxon>
    </lineage>
</organism>
<gene>
    <name evidence="1" type="primary">pstB</name>
    <name type="ordered locus">Mbar_A1781</name>
</gene>
<evidence type="ECO:0000255" key="1">
    <source>
        <dbReference type="HAMAP-Rule" id="MF_01702"/>
    </source>
</evidence>
<reference key="1">
    <citation type="journal article" date="2006" name="J. Bacteriol.">
        <title>The Methanosarcina barkeri genome: comparative analysis with Methanosarcina acetivorans and Methanosarcina mazei reveals extensive rearrangement within methanosarcinal genomes.</title>
        <authorList>
            <person name="Maeder D.L."/>
            <person name="Anderson I."/>
            <person name="Brettin T.S."/>
            <person name="Bruce D.C."/>
            <person name="Gilna P."/>
            <person name="Han C.S."/>
            <person name="Lapidus A."/>
            <person name="Metcalf W.W."/>
            <person name="Saunders E."/>
            <person name="Tapia R."/>
            <person name="Sowers K.R."/>
        </authorList>
    </citation>
    <scope>NUCLEOTIDE SEQUENCE [LARGE SCALE GENOMIC DNA]</scope>
    <source>
        <strain>Fusaro / DSM 804</strain>
    </source>
</reference>
<keyword id="KW-0067">ATP-binding</keyword>
<keyword id="KW-1003">Cell membrane</keyword>
<keyword id="KW-0472">Membrane</keyword>
<keyword id="KW-0547">Nucleotide-binding</keyword>
<keyword id="KW-0592">Phosphate transport</keyword>
<keyword id="KW-1278">Translocase</keyword>
<keyword id="KW-0813">Transport</keyword>
<accession>Q46BM0</accession>
<comment type="function">
    <text evidence="1">Part of the ABC transporter complex PstSACB involved in phosphate import. Responsible for energy coupling to the transport system.</text>
</comment>
<comment type="catalytic activity">
    <reaction evidence="1">
        <text>phosphate(out) + ATP + H2O = ADP + 2 phosphate(in) + H(+)</text>
        <dbReference type="Rhea" id="RHEA:24440"/>
        <dbReference type="ChEBI" id="CHEBI:15377"/>
        <dbReference type="ChEBI" id="CHEBI:15378"/>
        <dbReference type="ChEBI" id="CHEBI:30616"/>
        <dbReference type="ChEBI" id="CHEBI:43474"/>
        <dbReference type="ChEBI" id="CHEBI:456216"/>
        <dbReference type="EC" id="7.3.2.1"/>
    </reaction>
</comment>
<comment type="subunit">
    <text evidence="1">The complex is composed of two ATP-binding proteins (PstB), two transmembrane proteins (PstC and PstA) and a solute-binding protein (PstS).</text>
</comment>
<comment type="subcellular location">
    <subcellularLocation>
        <location evidence="1">Cell membrane</location>
        <topology evidence="1">Peripheral membrane protein</topology>
    </subcellularLocation>
</comment>
<comment type="similarity">
    <text evidence="1">Belongs to the ABC transporter superfamily. Phosphate importer (TC 3.A.1.7) family.</text>
</comment>
<feature type="chain" id="PRO_0000272588" description="Phosphate import ATP-binding protein PstB">
    <location>
        <begin position="1"/>
        <end position="258"/>
    </location>
</feature>
<feature type="domain" description="ABC transporter" evidence="1">
    <location>
        <begin position="13"/>
        <end position="253"/>
    </location>
</feature>
<feature type="binding site" evidence="1">
    <location>
        <begin position="45"/>
        <end position="52"/>
    </location>
    <ligand>
        <name>ATP</name>
        <dbReference type="ChEBI" id="CHEBI:30616"/>
    </ligand>
</feature>
<name>PSTB_METBF</name>
<dbReference type="EC" id="7.3.2.1" evidence="1"/>
<dbReference type="EMBL" id="CP000099">
    <property type="protein sequence ID" value="AAZ70722.1"/>
    <property type="molecule type" value="Genomic_DNA"/>
</dbReference>
<dbReference type="SMR" id="Q46BM0"/>
<dbReference type="STRING" id="269797.Mbar_A1781"/>
<dbReference type="PaxDb" id="269797-Mbar_A1781"/>
<dbReference type="KEGG" id="mba:Mbar_A1781"/>
<dbReference type="eggNOG" id="arCOG00231">
    <property type="taxonomic scope" value="Archaea"/>
</dbReference>
<dbReference type="HOGENOM" id="CLU_000604_1_22_2"/>
<dbReference type="OrthoDB" id="31298at2157"/>
<dbReference type="GO" id="GO:0005886">
    <property type="term" value="C:plasma membrane"/>
    <property type="evidence" value="ECO:0007669"/>
    <property type="project" value="UniProtKB-SubCell"/>
</dbReference>
<dbReference type="GO" id="GO:0005524">
    <property type="term" value="F:ATP binding"/>
    <property type="evidence" value="ECO:0007669"/>
    <property type="project" value="UniProtKB-KW"/>
</dbReference>
<dbReference type="GO" id="GO:0016887">
    <property type="term" value="F:ATP hydrolysis activity"/>
    <property type="evidence" value="ECO:0007669"/>
    <property type="project" value="InterPro"/>
</dbReference>
<dbReference type="GO" id="GO:0015415">
    <property type="term" value="F:ATPase-coupled phosphate ion transmembrane transporter activity"/>
    <property type="evidence" value="ECO:0007669"/>
    <property type="project" value="UniProtKB-EC"/>
</dbReference>
<dbReference type="GO" id="GO:0035435">
    <property type="term" value="P:phosphate ion transmembrane transport"/>
    <property type="evidence" value="ECO:0007669"/>
    <property type="project" value="InterPro"/>
</dbReference>
<dbReference type="CDD" id="cd03260">
    <property type="entry name" value="ABC_PstB_phosphate_transporter"/>
    <property type="match status" value="1"/>
</dbReference>
<dbReference type="FunFam" id="3.40.50.300:FF:000132">
    <property type="entry name" value="Phosphate import ATP-binding protein PstB"/>
    <property type="match status" value="1"/>
</dbReference>
<dbReference type="Gene3D" id="3.40.50.300">
    <property type="entry name" value="P-loop containing nucleotide triphosphate hydrolases"/>
    <property type="match status" value="1"/>
</dbReference>
<dbReference type="InterPro" id="IPR003593">
    <property type="entry name" value="AAA+_ATPase"/>
</dbReference>
<dbReference type="InterPro" id="IPR003439">
    <property type="entry name" value="ABC_transporter-like_ATP-bd"/>
</dbReference>
<dbReference type="InterPro" id="IPR017871">
    <property type="entry name" value="ABC_transporter-like_CS"/>
</dbReference>
<dbReference type="InterPro" id="IPR027417">
    <property type="entry name" value="P-loop_NTPase"/>
</dbReference>
<dbReference type="InterPro" id="IPR005670">
    <property type="entry name" value="PstB-like"/>
</dbReference>
<dbReference type="NCBIfam" id="TIGR00972">
    <property type="entry name" value="3a0107s01c2"/>
    <property type="match status" value="1"/>
</dbReference>
<dbReference type="PANTHER" id="PTHR43423">
    <property type="entry name" value="ABC TRANSPORTER I FAMILY MEMBER 17"/>
    <property type="match status" value="1"/>
</dbReference>
<dbReference type="PANTHER" id="PTHR43423:SF1">
    <property type="entry name" value="ABC TRANSPORTER I FAMILY MEMBER 17"/>
    <property type="match status" value="1"/>
</dbReference>
<dbReference type="Pfam" id="PF00005">
    <property type="entry name" value="ABC_tran"/>
    <property type="match status" value="1"/>
</dbReference>
<dbReference type="SMART" id="SM00382">
    <property type="entry name" value="AAA"/>
    <property type="match status" value="1"/>
</dbReference>
<dbReference type="SUPFAM" id="SSF52540">
    <property type="entry name" value="P-loop containing nucleoside triphosphate hydrolases"/>
    <property type="match status" value="1"/>
</dbReference>
<dbReference type="PROSITE" id="PS00211">
    <property type="entry name" value="ABC_TRANSPORTER_1"/>
    <property type="match status" value="1"/>
</dbReference>
<dbReference type="PROSITE" id="PS50893">
    <property type="entry name" value="ABC_TRANSPORTER_2"/>
    <property type="match status" value="1"/>
</dbReference>
<dbReference type="PROSITE" id="PS51238">
    <property type="entry name" value="PSTB"/>
    <property type="match status" value="1"/>
</dbReference>
<protein>
    <recommendedName>
        <fullName evidence="1">Phosphate import ATP-binding protein PstB</fullName>
        <ecNumber evidence="1">7.3.2.1</ecNumber>
    </recommendedName>
    <alternativeName>
        <fullName evidence="1">ABC phosphate transporter</fullName>
    </alternativeName>
    <alternativeName>
        <fullName evidence="1">Phosphate-transporting ATPase</fullName>
    </alternativeName>
</protein>
<proteinExistence type="inferred from homology"/>
<sequence length="258" mass="29016">MTEGIQNVSQPQIKIENLNLWYGEKQALKNVSMQIPKNSITALIGPSGCGKSTFIRCLNRMNDLINNCRIEGKVSIEGKDIYEPDVDAVELRKNVGMVFQKPNPFPMSIYDNVAYGPRIHGANKKDLDGVVEQALRSAAIWDEVSDRLKSPALSLSGGQQQRLCIARTLAVKPKTILFDEPTSALDPISTLRIEDLTMELKKDYTIVIVTHNMQQAARISDYTGFFLMGELIEFDQTRQIFQNPREKSTEDYITGRFG</sequence>